<sequence>MDAEDGFDPTLLKKKKKKKTTFDLDAALGLEDDTKKEDPQDEASAEGGAAAEEDNLDLESFGKKKKKKKKPFNMDEIEAAIPSFGGDDVAASEEPEEEEINLDMDFSMAKKKKKSKKKELDELFADQADDDKSEDKENDEDNSSTWFGSDRDYTYDELLKRVFEIILDKNPDMAAGRKPKFVMRPPQVLRVGTKKTSFANFMDIAKTLHRLPKHLLDFLLAELGTSGSMDGNQQLIIKGRFQPKQIENVLRRYIKEYVTCHTCRSPETILQKDTRLFFLQCESCGSRCSVASIKSGFQAVTGKRAAIRAKTT</sequence>
<organism>
    <name type="scientific">Drosophila melanogaster</name>
    <name type="common">Fruit fly</name>
    <dbReference type="NCBI Taxonomy" id="7227"/>
    <lineage>
        <taxon>Eukaryota</taxon>
        <taxon>Metazoa</taxon>
        <taxon>Ecdysozoa</taxon>
        <taxon>Arthropoda</taxon>
        <taxon>Hexapoda</taxon>
        <taxon>Insecta</taxon>
        <taxon>Pterygota</taxon>
        <taxon>Neoptera</taxon>
        <taxon>Endopterygota</taxon>
        <taxon>Diptera</taxon>
        <taxon>Brachycera</taxon>
        <taxon>Muscomorpha</taxon>
        <taxon>Ephydroidea</taxon>
        <taxon>Drosophilidae</taxon>
        <taxon>Drosophila</taxon>
        <taxon>Sophophora</taxon>
    </lineage>
</organism>
<evidence type="ECO:0000250" key="1">
    <source>
        <dbReference type="UniProtKB" id="P09064"/>
    </source>
</evidence>
<evidence type="ECO:0000250" key="2">
    <source>
        <dbReference type="UniProtKB" id="P56329"/>
    </source>
</evidence>
<evidence type="ECO:0000255" key="3"/>
<evidence type="ECO:0000256" key="4">
    <source>
        <dbReference type="SAM" id="MobiDB-lite"/>
    </source>
</evidence>
<evidence type="ECO:0000269" key="5">
    <source>
    </source>
</evidence>
<evidence type="ECO:0000269" key="6">
    <source>
    </source>
</evidence>
<evidence type="ECO:0000303" key="7">
    <source>
    </source>
</evidence>
<evidence type="ECO:0000305" key="8"/>
<evidence type="ECO:0000312" key="9">
    <source>
        <dbReference type="FlyBase" id="FBgn0004926"/>
    </source>
</evidence>
<feature type="chain" id="PRO_0000137409" description="Eukaryotic translation initiation factor 2 subunit 2">
    <location>
        <begin position="1"/>
        <end position="312"/>
    </location>
</feature>
<feature type="zinc finger region" description="C4-type" evidence="3">
    <location>
        <begin position="260"/>
        <end position="284"/>
    </location>
</feature>
<feature type="region of interest" description="Disordered" evidence="4">
    <location>
        <begin position="26"/>
        <end position="104"/>
    </location>
</feature>
<feature type="region of interest" description="Disordered" evidence="4">
    <location>
        <begin position="125"/>
        <end position="146"/>
    </location>
</feature>
<feature type="compositionally biased region" description="Acidic residues" evidence="4">
    <location>
        <begin position="90"/>
        <end position="102"/>
    </location>
</feature>
<feature type="compositionally biased region" description="Acidic residues" evidence="4">
    <location>
        <begin position="125"/>
        <end position="142"/>
    </location>
</feature>
<feature type="modified residue" description="Phosphoserine" evidence="5">
    <location>
        <position position="44"/>
    </location>
</feature>
<feature type="modified residue" description="Phosphoserine" evidence="6">
    <location>
        <position position="133"/>
    </location>
</feature>
<feature type="modified residue" description="Phosphothreonine" evidence="6">
    <location>
        <position position="145"/>
    </location>
</feature>
<feature type="sequence conflict" description="In Ref. 4; AAL48875." evidence="8" ref="4">
    <original>S</original>
    <variation>G</variation>
    <location>
        <position position="60"/>
    </location>
</feature>
<feature type="sequence conflict" description="In Ref. 4; AAL48875." evidence="8" ref="4">
    <original>K</original>
    <variation>E</variation>
    <location>
        <position position="64"/>
    </location>
</feature>
<accession>P41375</accession>
<accession>Q8SYX9</accession>
<accession>Q9VTZ3</accession>
<keyword id="KW-0963">Cytoplasm</keyword>
<keyword id="KW-0396">Initiation factor</keyword>
<keyword id="KW-0479">Metal-binding</keyword>
<keyword id="KW-0597">Phosphoprotein</keyword>
<keyword id="KW-0648">Protein biosynthesis</keyword>
<keyword id="KW-1185">Reference proteome</keyword>
<keyword id="KW-0862">Zinc</keyword>
<keyword id="KW-0863">Zinc-finger</keyword>
<dbReference type="EMBL" id="L19197">
    <property type="protein sequence ID" value="AAA28504.1"/>
    <property type="molecule type" value="mRNA"/>
</dbReference>
<dbReference type="EMBL" id="AE014296">
    <property type="protein sequence ID" value="AAF49902.1"/>
    <property type="molecule type" value="Genomic_DNA"/>
</dbReference>
<dbReference type="EMBL" id="AY071253">
    <property type="protein sequence ID" value="AAL48875.1"/>
    <property type="molecule type" value="mRNA"/>
</dbReference>
<dbReference type="RefSeq" id="NP_524043.1">
    <property type="nucleotide sequence ID" value="NM_079319.4"/>
</dbReference>
<dbReference type="SMR" id="P41375"/>
<dbReference type="BioGRID" id="64782">
    <property type="interactions" value="10"/>
</dbReference>
<dbReference type="DIP" id="DIP-21095N"/>
<dbReference type="FunCoup" id="P41375">
    <property type="interactions" value="2102"/>
</dbReference>
<dbReference type="IntAct" id="P41375">
    <property type="interactions" value="77"/>
</dbReference>
<dbReference type="STRING" id="7227.FBpp0075700"/>
<dbReference type="iPTMnet" id="P41375"/>
<dbReference type="SwissPalm" id="P41375"/>
<dbReference type="PaxDb" id="7227-FBpp0075700"/>
<dbReference type="EnsemblMetazoa" id="FBtr0075968">
    <property type="protein sequence ID" value="FBpp0075700"/>
    <property type="gene ID" value="FBgn0004926"/>
</dbReference>
<dbReference type="GeneID" id="39433"/>
<dbReference type="KEGG" id="dme:Dmel_CG4153"/>
<dbReference type="AGR" id="FB:FBgn0004926"/>
<dbReference type="CTD" id="39433"/>
<dbReference type="FlyBase" id="FBgn0004926">
    <property type="gene designation" value="eIF2beta"/>
</dbReference>
<dbReference type="VEuPathDB" id="VectorBase:FBgn0004926"/>
<dbReference type="eggNOG" id="KOG2768">
    <property type="taxonomic scope" value="Eukaryota"/>
</dbReference>
<dbReference type="GeneTree" id="ENSGT00390000001804"/>
<dbReference type="HOGENOM" id="CLU_026663_0_1_1"/>
<dbReference type="InParanoid" id="P41375"/>
<dbReference type="OMA" id="QIMREGN"/>
<dbReference type="OrthoDB" id="10255414at2759"/>
<dbReference type="PhylomeDB" id="P41375"/>
<dbReference type="Reactome" id="R-DME-156827">
    <property type="pathway name" value="L13a-mediated translational silencing of Ceruloplasmin expression"/>
</dbReference>
<dbReference type="Reactome" id="R-DME-381042">
    <property type="pathway name" value="PERK regulates gene expression"/>
</dbReference>
<dbReference type="Reactome" id="R-DME-382556">
    <property type="pathway name" value="ABC-family proteins mediated transport"/>
</dbReference>
<dbReference type="Reactome" id="R-DME-72649">
    <property type="pathway name" value="Translation initiation complex formation"/>
</dbReference>
<dbReference type="Reactome" id="R-DME-72695">
    <property type="pathway name" value="Formation of the ternary complex, and subsequently, the 43S complex"/>
</dbReference>
<dbReference type="Reactome" id="R-DME-72702">
    <property type="pathway name" value="Ribosomal scanning and start codon recognition"/>
</dbReference>
<dbReference type="Reactome" id="R-DME-72731">
    <property type="pathway name" value="Recycling of eIF2:GDP"/>
</dbReference>
<dbReference type="Reactome" id="R-DME-9840373">
    <property type="pathway name" value="Cellular response to mitochondrial stress"/>
</dbReference>
<dbReference type="BioGRID-ORCS" id="39433">
    <property type="hits" value="0 hits in 1 CRISPR screen"/>
</dbReference>
<dbReference type="GenomeRNAi" id="39433"/>
<dbReference type="PRO" id="PR:P41375"/>
<dbReference type="Proteomes" id="UP000000803">
    <property type="component" value="Chromosome 3L"/>
</dbReference>
<dbReference type="Bgee" id="FBgn0004926">
    <property type="expression patterns" value="Expressed in eye disc (Drosophila) and 266 other cell types or tissues"/>
</dbReference>
<dbReference type="ExpressionAtlas" id="P41375">
    <property type="expression patterns" value="baseline and differential"/>
</dbReference>
<dbReference type="GO" id="GO:0005829">
    <property type="term" value="C:cytosol"/>
    <property type="evidence" value="ECO:0000250"/>
    <property type="project" value="FlyBase"/>
</dbReference>
<dbReference type="GO" id="GO:0016282">
    <property type="term" value="C:eukaryotic 43S preinitiation complex"/>
    <property type="evidence" value="ECO:0000250"/>
    <property type="project" value="FlyBase"/>
</dbReference>
<dbReference type="GO" id="GO:0005850">
    <property type="term" value="C:eukaryotic translation initiation factor 2 complex"/>
    <property type="evidence" value="ECO:0000250"/>
    <property type="project" value="UniProtKB"/>
</dbReference>
<dbReference type="GO" id="GO:0043614">
    <property type="term" value="C:multi-eIF complex"/>
    <property type="evidence" value="ECO:0000250"/>
    <property type="project" value="FlyBase"/>
</dbReference>
<dbReference type="GO" id="GO:0003729">
    <property type="term" value="F:mRNA binding"/>
    <property type="evidence" value="ECO:0000318"/>
    <property type="project" value="GO_Central"/>
</dbReference>
<dbReference type="GO" id="GO:0003743">
    <property type="term" value="F:translation initiation factor activity"/>
    <property type="evidence" value="ECO:0000250"/>
    <property type="project" value="FlyBase"/>
</dbReference>
<dbReference type="GO" id="GO:0031369">
    <property type="term" value="F:translation initiation factor binding"/>
    <property type="evidence" value="ECO:0000318"/>
    <property type="project" value="GO_Central"/>
</dbReference>
<dbReference type="GO" id="GO:0008270">
    <property type="term" value="F:zinc ion binding"/>
    <property type="evidence" value="ECO:0007669"/>
    <property type="project" value="UniProtKB-KW"/>
</dbReference>
<dbReference type="GO" id="GO:0016199">
    <property type="term" value="P:axon midline choice point recognition"/>
    <property type="evidence" value="ECO:0000315"/>
    <property type="project" value="FlyBase"/>
</dbReference>
<dbReference type="GO" id="GO:0002183">
    <property type="term" value="P:cytoplasmic translational initiation"/>
    <property type="evidence" value="ECO:0000250"/>
    <property type="project" value="UniProtKB"/>
</dbReference>
<dbReference type="GO" id="GO:0001731">
    <property type="term" value="P:formation of translation preinitiation complex"/>
    <property type="evidence" value="ECO:0000250"/>
    <property type="project" value="FlyBase"/>
</dbReference>
<dbReference type="GO" id="GO:0034976">
    <property type="term" value="P:response to endoplasmic reticulum stress"/>
    <property type="evidence" value="ECO:0007001"/>
    <property type="project" value="FlyBase"/>
</dbReference>
<dbReference type="GO" id="GO:0006413">
    <property type="term" value="P:translational initiation"/>
    <property type="evidence" value="ECO:0000250"/>
    <property type="project" value="FlyBase"/>
</dbReference>
<dbReference type="FunFam" id="3.30.30.170:FF:000001">
    <property type="entry name" value="Eukaryotic translation initiation factor 2 subunit"/>
    <property type="match status" value="1"/>
</dbReference>
<dbReference type="Gene3D" id="3.30.30.170">
    <property type="match status" value="1"/>
</dbReference>
<dbReference type="InterPro" id="IPR045196">
    <property type="entry name" value="IF2/IF5"/>
</dbReference>
<dbReference type="InterPro" id="IPR002735">
    <property type="entry name" value="Transl_init_fac_IF2/IF5_dom"/>
</dbReference>
<dbReference type="InterPro" id="IPR016189">
    <property type="entry name" value="Transl_init_fac_IF2/IF5_N"/>
</dbReference>
<dbReference type="InterPro" id="IPR016190">
    <property type="entry name" value="Transl_init_fac_IF2/IF5_Zn-bd"/>
</dbReference>
<dbReference type="PANTHER" id="PTHR23001">
    <property type="entry name" value="EUKARYOTIC TRANSLATION INITIATION FACTOR"/>
    <property type="match status" value="1"/>
</dbReference>
<dbReference type="PANTHER" id="PTHR23001:SF3">
    <property type="entry name" value="EUKARYOTIC TRANSLATION INITIATION FACTOR 2 SUBUNIT 2"/>
    <property type="match status" value="1"/>
</dbReference>
<dbReference type="Pfam" id="PF01873">
    <property type="entry name" value="eIF-5_eIF-2B"/>
    <property type="match status" value="1"/>
</dbReference>
<dbReference type="SMART" id="SM00653">
    <property type="entry name" value="eIF2B_5"/>
    <property type="match status" value="1"/>
</dbReference>
<dbReference type="SUPFAM" id="SSF100966">
    <property type="entry name" value="Translation initiation factor 2 beta, aIF2beta, N-terminal domain"/>
    <property type="match status" value="1"/>
</dbReference>
<dbReference type="SUPFAM" id="SSF75689">
    <property type="entry name" value="Zinc-binding domain of translation initiation factor 2 beta"/>
    <property type="match status" value="1"/>
</dbReference>
<comment type="function">
    <text>Component of the eIF2 complex that functions in the early steps of protein synthesis by forming a ternary complex with GTP and initiator tRNA. This complex binds to a 40S ribosomal subunit, followed by mRNA binding to form a 43S pre-initiation complex (43S PIC). Junction of the 60S ribosomal subunit to form the 80S initiation complex is preceded by hydrolysis of the GTP bound to eIF2 and release of an eIF2-GDP binary complex. In order for eIF2 to recycle and catalyze another round of initiation, the GDP bound to eIF2 must exchange with GTP by way of a reaction catalyzed by eIF2B.</text>
</comment>
<comment type="subunit">
    <text evidence="1">Eukaryotic translation initiation factor 2 eIF2 is a heterotrimeric complex composed of an alpha, a beta and a gamma subunit.</text>
</comment>
<comment type="subcellular location">
    <subcellularLocation>
        <location evidence="2">Cytoplasm</location>
        <location evidence="2">Cytosol</location>
    </subcellularLocation>
</comment>
<comment type="similarity">
    <text evidence="8">Belongs to the eIF-2-beta/eIF-5 family.</text>
</comment>
<protein>
    <recommendedName>
        <fullName>Eukaryotic translation initiation factor 2 subunit 2</fullName>
    </recommendedName>
    <alternativeName>
        <fullName>Eukaryotic translation initiation factor 2 subunit beta</fullName>
        <shortName>eIF2-beta</shortName>
    </alternativeName>
</protein>
<name>IF2B_DROME</name>
<proteinExistence type="evidence at protein level"/>
<reference key="1">
    <citation type="journal article" date="1994" name="Gene">
        <title>Isolation and characterization of the Drosophila melanogaster gene encoding translation-initiation factor eIF-2 beta.</title>
        <authorList>
            <person name="Ye X."/>
            <person name="Cavener D.R."/>
        </authorList>
    </citation>
    <scope>NUCLEOTIDE SEQUENCE [MRNA]</scope>
    <source>
        <strain>Oregon-R</strain>
        <tissue>Embryo</tissue>
        <tissue>Pupae</tissue>
    </source>
</reference>
<reference key="2">
    <citation type="journal article" date="2000" name="Science">
        <title>The genome sequence of Drosophila melanogaster.</title>
        <authorList>
            <person name="Adams M.D."/>
            <person name="Celniker S.E."/>
            <person name="Holt R.A."/>
            <person name="Evans C.A."/>
            <person name="Gocayne J.D."/>
            <person name="Amanatides P.G."/>
            <person name="Scherer S.E."/>
            <person name="Li P.W."/>
            <person name="Hoskins R.A."/>
            <person name="Galle R.F."/>
            <person name="George R.A."/>
            <person name="Lewis S.E."/>
            <person name="Richards S."/>
            <person name="Ashburner M."/>
            <person name="Henderson S.N."/>
            <person name="Sutton G.G."/>
            <person name="Wortman J.R."/>
            <person name="Yandell M.D."/>
            <person name="Zhang Q."/>
            <person name="Chen L.X."/>
            <person name="Brandon R.C."/>
            <person name="Rogers Y.-H.C."/>
            <person name="Blazej R.G."/>
            <person name="Champe M."/>
            <person name="Pfeiffer B.D."/>
            <person name="Wan K.H."/>
            <person name="Doyle C."/>
            <person name="Baxter E.G."/>
            <person name="Helt G."/>
            <person name="Nelson C.R."/>
            <person name="Miklos G.L.G."/>
            <person name="Abril J.F."/>
            <person name="Agbayani A."/>
            <person name="An H.-J."/>
            <person name="Andrews-Pfannkoch C."/>
            <person name="Baldwin D."/>
            <person name="Ballew R.M."/>
            <person name="Basu A."/>
            <person name="Baxendale J."/>
            <person name="Bayraktaroglu L."/>
            <person name="Beasley E.M."/>
            <person name="Beeson K.Y."/>
            <person name="Benos P.V."/>
            <person name="Berman B.P."/>
            <person name="Bhandari D."/>
            <person name="Bolshakov S."/>
            <person name="Borkova D."/>
            <person name="Botchan M.R."/>
            <person name="Bouck J."/>
            <person name="Brokstein P."/>
            <person name="Brottier P."/>
            <person name="Burtis K.C."/>
            <person name="Busam D.A."/>
            <person name="Butler H."/>
            <person name="Cadieu E."/>
            <person name="Center A."/>
            <person name="Chandra I."/>
            <person name="Cherry J.M."/>
            <person name="Cawley S."/>
            <person name="Dahlke C."/>
            <person name="Davenport L.B."/>
            <person name="Davies P."/>
            <person name="de Pablos B."/>
            <person name="Delcher A."/>
            <person name="Deng Z."/>
            <person name="Mays A.D."/>
            <person name="Dew I."/>
            <person name="Dietz S.M."/>
            <person name="Dodson K."/>
            <person name="Doup L.E."/>
            <person name="Downes M."/>
            <person name="Dugan-Rocha S."/>
            <person name="Dunkov B.C."/>
            <person name="Dunn P."/>
            <person name="Durbin K.J."/>
            <person name="Evangelista C.C."/>
            <person name="Ferraz C."/>
            <person name="Ferriera S."/>
            <person name="Fleischmann W."/>
            <person name="Fosler C."/>
            <person name="Gabrielian A.E."/>
            <person name="Garg N.S."/>
            <person name="Gelbart W.M."/>
            <person name="Glasser K."/>
            <person name="Glodek A."/>
            <person name="Gong F."/>
            <person name="Gorrell J.H."/>
            <person name="Gu Z."/>
            <person name="Guan P."/>
            <person name="Harris M."/>
            <person name="Harris N.L."/>
            <person name="Harvey D.A."/>
            <person name="Heiman T.J."/>
            <person name="Hernandez J.R."/>
            <person name="Houck J."/>
            <person name="Hostin D."/>
            <person name="Houston K.A."/>
            <person name="Howland T.J."/>
            <person name="Wei M.-H."/>
            <person name="Ibegwam C."/>
            <person name="Jalali M."/>
            <person name="Kalush F."/>
            <person name="Karpen G.H."/>
            <person name="Ke Z."/>
            <person name="Kennison J.A."/>
            <person name="Ketchum K.A."/>
            <person name="Kimmel B.E."/>
            <person name="Kodira C.D."/>
            <person name="Kraft C.L."/>
            <person name="Kravitz S."/>
            <person name="Kulp D."/>
            <person name="Lai Z."/>
            <person name="Lasko P."/>
            <person name="Lei Y."/>
            <person name="Levitsky A.A."/>
            <person name="Li J.H."/>
            <person name="Li Z."/>
            <person name="Liang Y."/>
            <person name="Lin X."/>
            <person name="Liu X."/>
            <person name="Mattei B."/>
            <person name="McIntosh T.C."/>
            <person name="McLeod M.P."/>
            <person name="McPherson D."/>
            <person name="Merkulov G."/>
            <person name="Milshina N.V."/>
            <person name="Mobarry C."/>
            <person name="Morris J."/>
            <person name="Moshrefi A."/>
            <person name="Mount S.M."/>
            <person name="Moy M."/>
            <person name="Murphy B."/>
            <person name="Murphy L."/>
            <person name="Muzny D.M."/>
            <person name="Nelson D.L."/>
            <person name="Nelson D.R."/>
            <person name="Nelson K.A."/>
            <person name="Nixon K."/>
            <person name="Nusskern D.R."/>
            <person name="Pacleb J.M."/>
            <person name="Palazzolo M."/>
            <person name="Pittman G.S."/>
            <person name="Pan S."/>
            <person name="Pollard J."/>
            <person name="Puri V."/>
            <person name="Reese M.G."/>
            <person name="Reinert K."/>
            <person name="Remington K."/>
            <person name="Saunders R.D.C."/>
            <person name="Scheeler F."/>
            <person name="Shen H."/>
            <person name="Shue B.C."/>
            <person name="Siden-Kiamos I."/>
            <person name="Simpson M."/>
            <person name="Skupski M.P."/>
            <person name="Smith T.J."/>
            <person name="Spier E."/>
            <person name="Spradling A.C."/>
            <person name="Stapleton M."/>
            <person name="Strong R."/>
            <person name="Sun E."/>
            <person name="Svirskas R."/>
            <person name="Tector C."/>
            <person name="Turner R."/>
            <person name="Venter E."/>
            <person name="Wang A.H."/>
            <person name="Wang X."/>
            <person name="Wang Z.-Y."/>
            <person name="Wassarman D.A."/>
            <person name="Weinstock G.M."/>
            <person name="Weissenbach J."/>
            <person name="Williams S.M."/>
            <person name="Woodage T."/>
            <person name="Worley K.C."/>
            <person name="Wu D."/>
            <person name="Yang S."/>
            <person name="Yao Q.A."/>
            <person name="Ye J."/>
            <person name="Yeh R.-F."/>
            <person name="Zaveri J.S."/>
            <person name="Zhan M."/>
            <person name="Zhang G."/>
            <person name="Zhao Q."/>
            <person name="Zheng L."/>
            <person name="Zheng X.H."/>
            <person name="Zhong F.N."/>
            <person name="Zhong W."/>
            <person name="Zhou X."/>
            <person name="Zhu S.C."/>
            <person name="Zhu X."/>
            <person name="Smith H.O."/>
            <person name="Gibbs R.A."/>
            <person name="Myers E.W."/>
            <person name="Rubin G.M."/>
            <person name="Venter J.C."/>
        </authorList>
    </citation>
    <scope>NUCLEOTIDE SEQUENCE [LARGE SCALE GENOMIC DNA]</scope>
    <source>
        <strain>Berkeley</strain>
    </source>
</reference>
<reference key="3">
    <citation type="journal article" date="2002" name="Genome Biol.">
        <title>Annotation of the Drosophila melanogaster euchromatic genome: a systematic review.</title>
        <authorList>
            <person name="Misra S."/>
            <person name="Crosby M.A."/>
            <person name="Mungall C.J."/>
            <person name="Matthews B.B."/>
            <person name="Campbell K.S."/>
            <person name="Hradecky P."/>
            <person name="Huang Y."/>
            <person name="Kaminker J.S."/>
            <person name="Millburn G.H."/>
            <person name="Prochnik S.E."/>
            <person name="Smith C.D."/>
            <person name="Tupy J.L."/>
            <person name="Whitfield E.J."/>
            <person name="Bayraktaroglu L."/>
            <person name="Berman B.P."/>
            <person name="Bettencourt B.R."/>
            <person name="Celniker S.E."/>
            <person name="de Grey A.D.N.J."/>
            <person name="Drysdale R.A."/>
            <person name="Harris N.L."/>
            <person name="Richter J."/>
            <person name="Russo S."/>
            <person name="Schroeder A.J."/>
            <person name="Shu S.Q."/>
            <person name="Stapleton M."/>
            <person name="Yamada C."/>
            <person name="Ashburner M."/>
            <person name="Gelbart W.M."/>
            <person name="Rubin G.M."/>
            <person name="Lewis S.E."/>
        </authorList>
    </citation>
    <scope>GENOME REANNOTATION</scope>
    <source>
        <strain>Berkeley</strain>
    </source>
</reference>
<reference key="4">
    <citation type="journal article" date="2002" name="Genome Biol.">
        <title>A Drosophila full-length cDNA resource.</title>
        <authorList>
            <person name="Stapleton M."/>
            <person name="Carlson J.W."/>
            <person name="Brokstein P."/>
            <person name="Yu C."/>
            <person name="Champe M."/>
            <person name="George R.A."/>
            <person name="Guarin H."/>
            <person name="Kronmiller B."/>
            <person name="Pacleb J.M."/>
            <person name="Park S."/>
            <person name="Wan K.H."/>
            <person name="Rubin G.M."/>
            <person name="Celniker S.E."/>
        </authorList>
    </citation>
    <scope>NUCLEOTIDE SEQUENCE [LARGE SCALE MRNA]</scope>
    <source>
        <strain>Berkeley</strain>
        <tissue>Embryo</tissue>
    </source>
</reference>
<reference key="5">
    <citation type="journal article" date="2007" name="Mol. Biosyst.">
        <title>An integrated chemical, mass spectrometric and computational strategy for (quantitative) phosphoproteomics: application to Drosophila melanogaster Kc167 cells.</title>
        <authorList>
            <person name="Bodenmiller B."/>
            <person name="Mueller L.N."/>
            <person name="Pedrioli P.G.A."/>
            <person name="Pflieger D."/>
            <person name="Juenger M.A."/>
            <person name="Eng J.K."/>
            <person name="Aebersold R."/>
            <person name="Tao W.A."/>
        </authorList>
    </citation>
    <scope>PHOSPHORYLATION [LARGE SCALE ANALYSIS] AT SER-44</scope>
    <scope>IDENTIFICATION BY MASS SPECTROMETRY</scope>
</reference>
<reference key="6">
    <citation type="journal article" date="2008" name="J. Proteome Res.">
        <title>Phosphoproteome analysis of Drosophila melanogaster embryos.</title>
        <authorList>
            <person name="Zhai B."/>
            <person name="Villen J."/>
            <person name="Beausoleil S.A."/>
            <person name="Mintseris J."/>
            <person name="Gygi S.P."/>
        </authorList>
    </citation>
    <scope>PHOSPHORYLATION [LARGE SCALE ANALYSIS] AT SER-133 AND THR-145</scope>
    <scope>IDENTIFICATION BY MASS SPECTROMETRY</scope>
    <source>
        <tissue>Embryo</tissue>
    </source>
</reference>
<gene>
    <name evidence="9" type="primary">eIF2beta</name>
    <name evidence="7" type="synonym">eIF-2beta</name>
    <name evidence="9" type="ORF">CG4153</name>
</gene>